<name>UREG_ACIAD</name>
<organism>
    <name type="scientific">Acinetobacter baylyi (strain ATCC 33305 / BD413 / ADP1)</name>
    <dbReference type="NCBI Taxonomy" id="62977"/>
    <lineage>
        <taxon>Bacteria</taxon>
        <taxon>Pseudomonadati</taxon>
        <taxon>Pseudomonadota</taxon>
        <taxon>Gammaproteobacteria</taxon>
        <taxon>Moraxellales</taxon>
        <taxon>Moraxellaceae</taxon>
        <taxon>Acinetobacter</taxon>
    </lineage>
</organism>
<reference key="1">
    <citation type="journal article" date="2004" name="Nucleic Acids Res.">
        <title>Unique features revealed by the genome sequence of Acinetobacter sp. ADP1, a versatile and naturally transformation competent bacterium.</title>
        <authorList>
            <person name="Barbe V."/>
            <person name="Vallenet D."/>
            <person name="Fonknechten N."/>
            <person name="Kreimeyer A."/>
            <person name="Oztas S."/>
            <person name="Labarre L."/>
            <person name="Cruveiller S."/>
            <person name="Robert C."/>
            <person name="Duprat S."/>
            <person name="Wincker P."/>
            <person name="Ornston L.N."/>
            <person name="Weissenbach J."/>
            <person name="Marliere P."/>
            <person name="Cohen G.N."/>
            <person name="Medigue C."/>
        </authorList>
    </citation>
    <scope>NUCLEOTIDE SEQUENCE [LARGE SCALE GENOMIC DNA]</scope>
    <source>
        <strain>ATCC 33305 / BD413 / ADP1</strain>
    </source>
</reference>
<proteinExistence type="inferred from homology"/>
<gene>
    <name evidence="1" type="primary">ureG</name>
    <name type="ordered locus">ACIAD1095</name>
</gene>
<sequence length="204" mass="22106">MTERSPLRVGIGGPVGSGKTALTLNLCRALRNKYNMAVVTNDIYTKEDSNFLTRNEAMTPDRIVGVETGGCPHTAIREDASINLAAIDDLCEKFDGLELIIIESGGDNLAATFSPELSDLTLYVIDVAGGEKIPRKGGPGITKSDLLIINKTDLAPMVGANLDVMEQDAKRMRGEKPFLFSNMKTEDGLTQIIEFIEKQGLFKA</sequence>
<dbReference type="EMBL" id="CR543861">
    <property type="protein sequence ID" value="CAG67980.1"/>
    <property type="molecule type" value="Genomic_DNA"/>
</dbReference>
<dbReference type="RefSeq" id="WP_004921551.1">
    <property type="nucleotide sequence ID" value="NC_005966.1"/>
</dbReference>
<dbReference type="SMR" id="Q6FD79"/>
<dbReference type="STRING" id="202950.GCA_001485005_01272"/>
<dbReference type="GeneID" id="45233531"/>
<dbReference type="KEGG" id="aci:ACIAD1095"/>
<dbReference type="eggNOG" id="COG0378">
    <property type="taxonomic scope" value="Bacteria"/>
</dbReference>
<dbReference type="HOGENOM" id="CLU_072144_1_0_6"/>
<dbReference type="OrthoDB" id="9802035at2"/>
<dbReference type="BioCyc" id="ASP62977:ACIAD_RS05035-MONOMER"/>
<dbReference type="Proteomes" id="UP000000430">
    <property type="component" value="Chromosome"/>
</dbReference>
<dbReference type="GO" id="GO:0005737">
    <property type="term" value="C:cytoplasm"/>
    <property type="evidence" value="ECO:0007669"/>
    <property type="project" value="UniProtKB-SubCell"/>
</dbReference>
<dbReference type="GO" id="GO:0005525">
    <property type="term" value="F:GTP binding"/>
    <property type="evidence" value="ECO:0007669"/>
    <property type="project" value="UniProtKB-KW"/>
</dbReference>
<dbReference type="GO" id="GO:0003924">
    <property type="term" value="F:GTPase activity"/>
    <property type="evidence" value="ECO:0007669"/>
    <property type="project" value="InterPro"/>
</dbReference>
<dbReference type="GO" id="GO:0016151">
    <property type="term" value="F:nickel cation binding"/>
    <property type="evidence" value="ECO:0007669"/>
    <property type="project" value="UniProtKB-UniRule"/>
</dbReference>
<dbReference type="GO" id="GO:0043419">
    <property type="term" value="P:urea catabolic process"/>
    <property type="evidence" value="ECO:0007669"/>
    <property type="project" value="InterPro"/>
</dbReference>
<dbReference type="CDD" id="cd05540">
    <property type="entry name" value="UreG"/>
    <property type="match status" value="1"/>
</dbReference>
<dbReference type="FunFam" id="3.40.50.300:FF:000208">
    <property type="entry name" value="Urease accessory protein UreG"/>
    <property type="match status" value="1"/>
</dbReference>
<dbReference type="Gene3D" id="3.40.50.300">
    <property type="entry name" value="P-loop containing nucleotide triphosphate hydrolases"/>
    <property type="match status" value="1"/>
</dbReference>
<dbReference type="HAMAP" id="MF_01389">
    <property type="entry name" value="UreG"/>
    <property type="match status" value="1"/>
</dbReference>
<dbReference type="InterPro" id="IPR003495">
    <property type="entry name" value="CobW/HypB/UreG_nucleotide-bd"/>
</dbReference>
<dbReference type="InterPro" id="IPR027417">
    <property type="entry name" value="P-loop_NTPase"/>
</dbReference>
<dbReference type="InterPro" id="IPR004400">
    <property type="entry name" value="UreG"/>
</dbReference>
<dbReference type="NCBIfam" id="TIGR00101">
    <property type="entry name" value="ureG"/>
    <property type="match status" value="1"/>
</dbReference>
<dbReference type="PANTHER" id="PTHR31715">
    <property type="entry name" value="UREASE ACCESSORY PROTEIN G"/>
    <property type="match status" value="1"/>
</dbReference>
<dbReference type="PANTHER" id="PTHR31715:SF0">
    <property type="entry name" value="UREASE ACCESSORY PROTEIN G"/>
    <property type="match status" value="1"/>
</dbReference>
<dbReference type="Pfam" id="PF02492">
    <property type="entry name" value="cobW"/>
    <property type="match status" value="1"/>
</dbReference>
<dbReference type="PIRSF" id="PIRSF005624">
    <property type="entry name" value="Ni-bind_GTPase"/>
    <property type="match status" value="1"/>
</dbReference>
<dbReference type="SUPFAM" id="SSF52540">
    <property type="entry name" value="P-loop containing nucleoside triphosphate hydrolases"/>
    <property type="match status" value="1"/>
</dbReference>
<comment type="function">
    <text evidence="1">Facilitates the functional incorporation of the urease nickel metallocenter. This process requires GTP hydrolysis, probably effectuated by UreG.</text>
</comment>
<comment type="subunit">
    <text evidence="1">Homodimer. UreD, UreF and UreG form a complex that acts as a GTP-hydrolysis-dependent molecular chaperone, activating the urease apoprotein by helping to assemble the nickel containing metallocenter of UreC. The UreE protein probably delivers the nickel.</text>
</comment>
<comment type="subcellular location">
    <subcellularLocation>
        <location evidence="1">Cytoplasm</location>
    </subcellularLocation>
</comment>
<comment type="similarity">
    <text evidence="1">Belongs to the SIMIBI class G3E GTPase family. UreG subfamily.</text>
</comment>
<keyword id="KW-0143">Chaperone</keyword>
<keyword id="KW-0963">Cytoplasm</keyword>
<keyword id="KW-0342">GTP-binding</keyword>
<keyword id="KW-0996">Nickel insertion</keyword>
<keyword id="KW-0547">Nucleotide-binding</keyword>
<evidence type="ECO:0000255" key="1">
    <source>
        <dbReference type="HAMAP-Rule" id="MF_01389"/>
    </source>
</evidence>
<feature type="chain" id="PRO_1000145156" description="Urease accessory protein UreG">
    <location>
        <begin position="1"/>
        <end position="204"/>
    </location>
</feature>
<feature type="binding site" evidence="1">
    <location>
        <begin position="13"/>
        <end position="20"/>
    </location>
    <ligand>
        <name>GTP</name>
        <dbReference type="ChEBI" id="CHEBI:37565"/>
    </ligand>
</feature>
<accession>Q6FD79</accession>
<protein>
    <recommendedName>
        <fullName evidence="1">Urease accessory protein UreG</fullName>
    </recommendedName>
</protein>